<organism>
    <name type="scientific">Clostridioides difficile (strain 630)</name>
    <name type="common">Peptoclostridium difficile</name>
    <dbReference type="NCBI Taxonomy" id="272563"/>
    <lineage>
        <taxon>Bacteria</taxon>
        <taxon>Bacillati</taxon>
        <taxon>Bacillota</taxon>
        <taxon>Clostridia</taxon>
        <taxon>Peptostreptococcales</taxon>
        <taxon>Peptostreptococcaceae</taxon>
        <taxon>Clostridioides</taxon>
    </lineage>
</organism>
<gene>
    <name evidence="1" type="primary">glgA</name>
    <name type="ordered locus">CD630_08840</name>
</gene>
<sequence length="480" mass="55524">MKVFYVTAECWPFAKTGGLGDVSYALPKELKKEGVDVRVIMPKYSTIPSYLKDQLKEIAVFSVRVGWRNQYCGLLEMELDGVKFYFIDNEFYFRREDERKSIYGYGDDAERYTFFTDAVLEAISRIDFYPDVIHINDWHTGMLPLILKERYATLEGYKNIKTMYTIHNLQYQGVFDKHVLYDILDLPQKYFDNGDIEYYGSINFMKAGINFADKIITVSPTYANEIQTSFYGEQLDGLLRKESGKLKGILNGIDYDLNDPAKDKDIFVHYDVDSINKKVENKLRLQDILGLKKDSSIPLIGIVSRLVSQKGFDLIAYMMPELMREDLQIVVLGTGEHQYQSMFNYYDSNFSDKVSARITFNASLAQQIYAASDMFLMPSLFEPCGIGQMLAMRYGSLPIVRETGGLRDTVTPYNKFTGEGNGFSFKNYNAHEMFFCLKNAIKVFKDKEKWIKLVENAMKTDNSWKKSAKEYIETYRDICD</sequence>
<comment type="function">
    <text evidence="1">Synthesizes alpha-1,4-glucan chains using ADP-glucose.</text>
</comment>
<comment type="catalytic activity">
    <reaction evidence="1">
        <text>[(1-&gt;4)-alpha-D-glucosyl](n) + ADP-alpha-D-glucose = [(1-&gt;4)-alpha-D-glucosyl](n+1) + ADP + H(+)</text>
        <dbReference type="Rhea" id="RHEA:18189"/>
        <dbReference type="Rhea" id="RHEA-COMP:9584"/>
        <dbReference type="Rhea" id="RHEA-COMP:9587"/>
        <dbReference type="ChEBI" id="CHEBI:15378"/>
        <dbReference type="ChEBI" id="CHEBI:15444"/>
        <dbReference type="ChEBI" id="CHEBI:57498"/>
        <dbReference type="ChEBI" id="CHEBI:456216"/>
        <dbReference type="EC" id="2.4.1.21"/>
    </reaction>
</comment>
<comment type="pathway">
    <text evidence="1">Glycan biosynthesis; glycogen biosynthesis.</text>
</comment>
<comment type="similarity">
    <text evidence="1">Belongs to the glycosyltransferase 1 family. Bacterial/plant glycogen synthase subfamily.</text>
</comment>
<proteinExistence type="inferred from homology"/>
<feature type="chain" id="PRO_1000014347" description="Glycogen synthase">
    <location>
        <begin position="1"/>
        <end position="480"/>
    </location>
</feature>
<feature type="binding site" evidence="1">
    <location>
        <position position="15"/>
    </location>
    <ligand>
        <name>ADP-alpha-D-glucose</name>
        <dbReference type="ChEBI" id="CHEBI:57498"/>
    </ligand>
</feature>
<accession>Q18A79</accession>
<dbReference type="EC" id="2.4.1.21" evidence="1"/>
<dbReference type="EMBL" id="AM180355">
    <property type="protein sequence ID" value="CAJ67717.1"/>
    <property type="molecule type" value="Genomic_DNA"/>
</dbReference>
<dbReference type="RefSeq" id="WP_011860977.1">
    <property type="nucleotide sequence ID" value="NZ_JAUPES010000038.1"/>
</dbReference>
<dbReference type="RefSeq" id="YP_001087358.1">
    <property type="nucleotide sequence ID" value="NC_009089.1"/>
</dbReference>
<dbReference type="SMR" id="Q18A79"/>
<dbReference type="STRING" id="272563.CD630_08840"/>
<dbReference type="CAZy" id="GT5">
    <property type="family name" value="Glycosyltransferase Family 5"/>
</dbReference>
<dbReference type="EnsemblBacteria" id="CAJ67717">
    <property type="protein sequence ID" value="CAJ67717"/>
    <property type="gene ID" value="CD630_08840"/>
</dbReference>
<dbReference type="KEGG" id="cdf:CD630_08840"/>
<dbReference type="KEGG" id="pdc:CDIF630_01004"/>
<dbReference type="PATRIC" id="fig|272563.120.peg.908"/>
<dbReference type="eggNOG" id="COG0297">
    <property type="taxonomic scope" value="Bacteria"/>
</dbReference>
<dbReference type="OrthoDB" id="9808590at2"/>
<dbReference type="PhylomeDB" id="Q18A79"/>
<dbReference type="BioCyc" id="PDIF272563:G12WB-992-MONOMER"/>
<dbReference type="UniPathway" id="UPA00164"/>
<dbReference type="Proteomes" id="UP000001978">
    <property type="component" value="Chromosome"/>
</dbReference>
<dbReference type="GO" id="GO:0009011">
    <property type="term" value="F:alpha-1,4-glucan glucosyltransferase (ADP-glucose donor) activity"/>
    <property type="evidence" value="ECO:0007669"/>
    <property type="project" value="UniProtKB-UniRule"/>
</dbReference>
<dbReference type="GO" id="GO:0004373">
    <property type="term" value="F:alpha-1,4-glucan glucosyltransferase (UDP-glucose donor) activity"/>
    <property type="evidence" value="ECO:0007669"/>
    <property type="project" value="InterPro"/>
</dbReference>
<dbReference type="GO" id="GO:0005978">
    <property type="term" value="P:glycogen biosynthetic process"/>
    <property type="evidence" value="ECO:0007669"/>
    <property type="project" value="UniProtKB-UniRule"/>
</dbReference>
<dbReference type="CDD" id="cd03791">
    <property type="entry name" value="GT5_Glycogen_synthase_DULL1-like"/>
    <property type="match status" value="1"/>
</dbReference>
<dbReference type="Gene3D" id="3.40.50.2000">
    <property type="entry name" value="Glycogen Phosphorylase B"/>
    <property type="match status" value="2"/>
</dbReference>
<dbReference type="HAMAP" id="MF_00484">
    <property type="entry name" value="Glycogen_synth"/>
    <property type="match status" value="1"/>
</dbReference>
<dbReference type="InterPro" id="IPR001296">
    <property type="entry name" value="Glyco_trans_1"/>
</dbReference>
<dbReference type="InterPro" id="IPR011835">
    <property type="entry name" value="GS/SS"/>
</dbReference>
<dbReference type="InterPro" id="IPR013534">
    <property type="entry name" value="Starch_synth_cat_dom"/>
</dbReference>
<dbReference type="NCBIfam" id="TIGR02095">
    <property type="entry name" value="glgA"/>
    <property type="match status" value="1"/>
</dbReference>
<dbReference type="NCBIfam" id="NF001898">
    <property type="entry name" value="PRK00654.1-1"/>
    <property type="match status" value="1"/>
</dbReference>
<dbReference type="PANTHER" id="PTHR45825:SF11">
    <property type="entry name" value="ALPHA AMYLASE DOMAIN-CONTAINING PROTEIN"/>
    <property type="match status" value="1"/>
</dbReference>
<dbReference type="PANTHER" id="PTHR45825">
    <property type="entry name" value="GRANULE-BOUND STARCH SYNTHASE 1, CHLOROPLASTIC/AMYLOPLASTIC"/>
    <property type="match status" value="1"/>
</dbReference>
<dbReference type="Pfam" id="PF08323">
    <property type="entry name" value="Glyco_transf_5"/>
    <property type="match status" value="1"/>
</dbReference>
<dbReference type="Pfam" id="PF00534">
    <property type="entry name" value="Glycos_transf_1"/>
    <property type="match status" value="1"/>
</dbReference>
<dbReference type="SUPFAM" id="SSF53756">
    <property type="entry name" value="UDP-Glycosyltransferase/glycogen phosphorylase"/>
    <property type="match status" value="1"/>
</dbReference>
<name>GLGA_CLOD6</name>
<keyword id="KW-0320">Glycogen biosynthesis</keyword>
<keyword id="KW-0328">Glycosyltransferase</keyword>
<keyword id="KW-1185">Reference proteome</keyword>
<keyword id="KW-0808">Transferase</keyword>
<reference key="1">
    <citation type="journal article" date="2006" name="Nat. Genet.">
        <title>The multidrug-resistant human pathogen Clostridium difficile has a highly mobile, mosaic genome.</title>
        <authorList>
            <person name="Sebaihia M."/>
            <person name="Wren B.W."/>
            <person name="Mullany P."/>
            <person name="Fairweather N.F."/>
            <person name="Minton N."/>
            <person name="Stabler R."/>
            <person name="Thomson N.R."/>
            <person name="Roberts A.P."/>
            <person name="Cerdeno-Tarraga A.M."/>
            <person name="Wang H."/>
            <person name="Holden M.T.G."/>
            <person name="Wright A."/>
            <person name="Churcher C."/>
            <person name="Quail M.A."/>
            <person name="Baker S."/>
            <person name="Bason N."/>
            <person name="Brooks K."/>
            <person name="Chillingworth T."/>
            <person name="Cronin A."/>
            <person name="Davis P."/>
            <person name="Dowd L."/>
            <person name="Fraser A."/>
            <person name="Feltwell T."/>
            <person name="Hance Z."/>
            <person name="Holroyd S."/>
            <person name="Jagels K."/>
            <person name="Moule S."/>
            <person name="Mungall K."/>
            <person name="Price C."/>
            <person name="Rabbinowitsch E."/>
            <person name="Sharp S."/>
            <person name="Simmonds M."/>
            <person name="Stevens K."/>
            <person name="Unwin L."/>
            <person name="Whithead S."/>
            <person name="Dupuy B."/>
            <person name="Dougan G."/>
            <person name="Barrell B."/>
            <person name="Parkhill J."/>
        </authorList>
    </citation>
    <scope>NUCLEOTIDE SEQUENCE [LARGE SCALE GENOMIC DNA]</scope>
    <source>
        <strain>630</strain>
    </source>
</reference>
<evidence type="ECO:0000255" key="1">
    <source>
        <dbReference type="HAMAP-Rule" id="MF_00484"/>
    </source>
</evidence>
<protein>
    <recommendedName>
        <fullName evidence="1">Glycogen synthase</fullName>
        <ecNumber evidence="1">2.4.1.21</ecNumber>
    </recommendedName>
    <alternativeName>
        <fullName evidence="1">Starch [bacterial glycogen] synthase</fullName>
    </alternativeName>
</protein>